<keyword id="KW-0687">Ribonucleoprotein</keyword>
<keyword id="KW-0689">Ribosomal protein</keyword>
<reference key="1">
    <citation type="submission" date="2007-04" db="EMBL/GenBank/DDBJ databases">
        <title>Complete sequence of Pseudomonas mendocina ymp.</title>
        <authorList>
            <consortium name="US DOE Joint Genome Institute"/>
            <person name="Copeland A."/>
            <person name="Lucas S."/>
            <person name="Lapidus A."/>
            <person name="Barry K."/>
            <person name="Glavina del Rio T."/>
            <person name="Dalin E."/>
            <person name="Tice H."/>
            <person name="Pitluck S."/>
            <person name="Kiss H."/>
            <person name="Brettin T."/>
            <person name="Detter J.C."/>
            <person name="Bruce D."/>
            <person name="Han C."/>
            <person name="Schmutz J."/>
            <person name="Larimer F."/>
            <person name="Land M."/>
            <person name="Hauser L."/>
            <person name="Kyrpides N."/>
            <person name="Mikhailova N."/>
            <person name="Hersman L."/>
            <person name="Dubois J."/>
            <person name="Maurice P."/>
            <person name="Richardson P."/>
        </authorList>
    </citation>
    <scope>NUCLEOTIDE SEQUENCE [LARGE SCALE GENOMIC DNA]</scope>
    <source>
        <strain>ymp</strain>
    </source>
</reference>
<proteinExistence type="inferred from homology"/>
<organism>
    <name type="scientific">Ectopseudomonas mendocina (strain ymp)</name>
    <name type="common">Pseudomonas mendocina</name>
    <dbReference type="NCBI Taxonomy" id="399739"/>
    <lineage>
        <taxon>Bacteria</taxon>
        <taxon>Pseudomonadati</taxon>
        <taxon>Pseudomonadota</taxon>
        <taxon>Gammaproteobacteria</taxon>
        <taxon>Pseudomonadales</taxon>
        <taxon>Pseudomonadaceae</taxon>
        <taxon>Ectopseudomonas</taxon>
    </lineage>
</organism>
<protein>
    <recommendedName>
        <fullName evidence="1">Large ribosomal subunit protein bL28</fullName>
    </recommendedName>
    <alternativeName>
        <fullName evidence="3">50S ribosomal protein L28</fullName>
    </alternativeName>
</protein>
<accession>A4Y0K5</accession>
<comment type="similarity">
    <text evidence="1">Belongs to the bacterial ribosomal protein bL28 family.</text>
</comment>
<evidence type="ECO:0000255" key="1">
    <source>
        <dbReference type="HAMAP-Rule" id="MF_00373"/>
    </source>
</evidence>
<evidence type="ECO:0000256" key="2">
    <source>
        <dbReference type="SAM" id="MobiDB-lite"/>
    </source>
</evidence>
<evidence type="ECO:0000305" key="3"/>
<feature type="chain" id="PRO_1000007315" description="Large ribosomal subunit protein bL28">
    <location>
        <begin position="1"/>
        <end position="78"/>
    </location>
</feature>
<feature type="region of interest" description="Disordered" evidence="2">
    <location>
        <begin position="1"/>
        <end position="20"/>
    </location>
</feature>
<gene>
    <name evidence="1" type="primary">rpmB</name>
    <name type="ordered locus">Pmen_4374</name>
</gene>
<dbReference type="EMBL" id="CP000680">
    <property type="protein sequence ID" value="ABP87121.1"/>
    <property type="molecule type" value="Genomic_DNA"/>
</dbReference>
<dbReference type="SMR" id="A4Y0K5"/>
<dbReference type="STRING" id="399739.Pmen_4374"/>
<dbReference type="KEGG" id="pmy:Pmen_4374"/>
<dbReference type="eggNOG" id="COG0227">
    <property type="taxonomic scope" value="Bacteria"/>
</dbReference>
<dbReference type="HOGENOM" id="CLU_064548_3_1_6"/>
<dbReference type="OrthoDB" id="9805609at2"/>
<dbReference type="GO" id="GO:0022625">
    <property type="term" value="C:cytosolic large ribosomal subunit"/>
    <property type="evidence" value="ECO:0007669"/>
    <property type="project" value="TreeGrafter"/>
</dbReference>
<dbReference type="GO" id="GO:0003735">
    <property type="term" value="F:structural constituent of ribosome"/>
    <property type="evidence" value="ECO:0007669"/>
    <property type="project" value="InterPro"/>
</dbReference>
<dbReference type="GO" id="GO:0006412">
    <property type="term" value="P:translation"/>
    <property type="evidence" value="ECO:0007669"/>
    <property type="project" value="UniProtKB-UniRule"/>
</dbReference>
<dbReference type="FunFam" id="2.30.170.40:FF:000001">
    <property type="entry name" value="50S ribosomal protein L28"/>
    <property type="match status" value="1"/>
</dbReference>
<dbReference type="Gene3D" id="2.30.170.40">
    <property type="entry name" value="Ribosomal protein L28/L24"/>
    <property type="match status" value="1"/>
</dbReference>
<dbReference type="HAMAP" id="MF_00373">
    <property type="entry name" value="Ribosomal_bL28"/>
    <property type="match status" value="1"/>
</dbReference>
<dbReference type="InterPro" id="IPR026569">
    <property type="entry name" value="Ribosomal_bL28"/>
</dbReference>
<dbReference type="InterPro" id="IPR034704">
    <property type="entry name" value="Ribosomal_bL28/bL31-like_sf"/>
</dbReference>
<dbReference type="InterPro" id="IPR001383">
    <property type="entry name" value="Ribosomal_bL28_bact-type"/>
</dbReference>
<dbReference type="InterPro" id="IPR037147">
    <property type="entry name" value="Ribosomal_bL28_sf"/>
</dbReference>
<dbReference type="NCBIfam" id="TIGR00009">
    <property type="entry name" value="L28"/>
    <property type="match status" value="1"/>
</dbReference>
<dbReference type="PANTHER" id="PTHR13528">
    <property type="entry name" value="39S RIBOSOMAL PROTEIN L28, MITOCHONDRIAL"/>
    <property type="match status" value="1"/>
</dbReference>
<dbReference type="PANTHER" id="PTHR13528:SF2">
    <property type="entry name" value="LARGE RIBOSOMAL SUBUNIT PROTEIN BL28M"/>
    <property type="match status" value="1"/>
</dbReference>
<dbReference type="Pfam" id="PF00830">
    <property type="entry name" value="Ribosomal_L28"/>
    <property type="match status" value="1"/>
</dbReference>
<dbReference type="SUPFAM" id="SSF143800">
    <property type="entry name" value="L28p-like"/>
    <property type="match status" value="1"/>
</dbReference>
<name>RL28_ECTM1</name>
<sequence length="78" mass="9009">MSRVCQVTGKGPVTGNNISHANNKTRRRFLPNLQHHRFWVESEKRFVRLRVSAKGMRVIDKRGIDVVLAELRARGEKV</sequence>